<dbReference type="EC" id="3.1.-.-" evidence="1"/>
<dbReference type="EMBL" id="CP000673">
    <property type="protein sequence ID" value="EDK33488.1"/>
    <property type="molecule type" value="Genomic_DNA"/>
</dbReference>
<dbReference type="SMR" id="A5N857"/>
<dbReference type="STRING" id="431943.CKL_1446"/>
<dbReference type="KEGG" id="ckl:CKL_1446"/>
<dbReference type="eggNOG" id="COG1418">
    <property type="taxonomic scope" value="Bacteria"/>
</dbReference>
<dbReference type="HOGENOM" id="CLU_028328_1_0_9"/>
<dbReference type="Proteomes" id="UP000002411">
    <property type="component" value="Chromosome"/>
</dbReference>
<dbReference type="GO" id="GO:0005886">
    <property type="term" value="C:plasma membrane"/>
    <property type="evidence" value="ECO:0007669"/>
    <property type="project" value="UniProtKB-SubCell"/>
</dbReference>
<dbReference type="GO" id="GO:0003723">
    <property type="term" value="F:RNA binding"/>
    <property type="evidence" value="ECO:0007669"/>
    <property type="project" value="UniProtKB-UniRule"/>
</dbReference>
<dbReference type="GO" id="GO:0004521">
    <property type="term" value="F:RNA endonuclease activity"/>
    <property type="evidence" value="ECO:0007669"/>
    <property type="project" value="UniProtKB-UniRule"/>
</dbReference>
<dbReference type="GO" id="GO:0006402">
    <property type="term" value="P:mRNA catabolic process"/>
    <property type="evidence" value="ECO:0007669"/>
    <property type="project" value="UniProtKB-UniRule"/>
</dbReference>
<dbReference type="CDD" id="cd00077">
    <property type="entry name" value="HDc"/>
    <property type="match status" value="1"/>
</dbReference>
<dbReference type="CDD" id="cd22431">
    <property type="entry name" value="KH-I_RNaseY"/>
    <property type="match status" value="1"/>
</dbReference>
<dbReference type="FunFam" id="1.10.3210.10:FF:000003">
    <property type="entry name" value="Ribonuclease Y"/>
    <property type="match status" value="1"/>
</dbReference>
<dbReference type="FunFam" id="3.30.1370.10:FF:000006">
    <property type="entry name" value="Ribonuclease Y"/>
    <property type="match status" value="1"/>
</dbReference>
<dbReference type="Gene3D" id="1.10.3210.10">
    <property type="entry name" value="Hypothetical protein af1432"/>
    <property type="match status" value="1"/>
</dbReference>
<dbReference type="Gene3D" id="3.30.1370.10">
    <property type="entry name" value="K Homology domain, type 1"/>
    <property type="match status" value="1"/>
</dbReference>
<dbReference type="HAMAP" id="MF_00335">
    <property type="entry name" value="RNase_Y"/>
    <property type="match status" value="1"/>
</dbReference>
<dbReference type="InterPro" id="IPR003607">
    <property type="entry name" value="HD/PDEase_dom"/>
</dbReference>
<dbReference type="InterPro" id="IPR006674">
    <property type="entry name" value="HD_domain"/>
</dbReference>
<dbReference type="InterPro" id="IPR006675">
    <property type="entry name" value="HDIG_dom"/>
</dbReference>
<dbReference type="InterPro" id="IPR004087">
    <property type="entry name" value="KH_dom"/>
</dbReference>
<dbReference type="InterPro" id="IPR004088">
    <property type="entry name" value="KH_dom_type_1"/>
</dbReference>
<dbReference type="InterPro" id="IPR036612">
    <property type="entry name" value="KH_dom_type_1_sf"/>
</dbReference>
<dbReference type="InterPro" id="IPR017705">
    <property type="entry name" value="Ribonuclease_Y"/>
</dbReference>
<dbReference type="InterPro" id="IPR022711">
    <property type="entry name" value="RNase_Y_N"/>
</dbReference>
<dbReference type="NCBIfam" id="TIGR00277">
    <property type="entry name" value="HDIG"/>
    <property type="match status" value="1"/>
</dbReference>
<dbReference type="NCBIfam" id="TIGR03319">
    <property type="entry name" value="RNase_Y"/>
    <property type="match status" value="1"/>
</dbReference>
<dbReference type="PANTHER" id="PTHR12826">
    <property type="entry name" value="RIBONUCLEASE Y"/>
    <property type="match status" value="1"/>
</dbReference>
<dbReference type="PANTHER" id="PTHR12826:SF15">
    <property type="entry name" value="RIBONUCLEASE Y"/>
    <property type="match status" value="1"/>
</dbReference>
<dbReference type="Pfam" id="PF01966">
    <property type="entry name" value="HD"/>
    <property type="match status" value="1"/>
</dbReference>
<dbReference type="Pfam" id="PF00013">
    <property type="entry name" value="KH_1"/>
    <property type="match status" value="1"/>
</dbReference>
<dbReference type="Pfam" id="PF12072">
    <property type="entry name" value="RNase_Y_N"/>
    <property type="match status" value="1"/>
</dbReference>
<dbReference type="SMART" id="SM00471">
    <property type="entry name" value="HDc"/>
    <property type="match status" value="1"/>
</dbReference>
<dbReference type="SMART" id="SM00322">
    <property type="entry name" value="KH"/>
    <property type="match status" value="1"/>
</dbReference>
<dbReference type="SUPFAM" id="SSF54791">
    <property type="entry name" value="Eukaryotic type KH-domain (KH-domain type I)"/>
    <property type="match status" value="1"/>
</dbReference>
<dbReference type="SUPFAM" id="SSF109604">
    <property type="entry name" value="HD-domain/PDEase-like"/>
    <property type="match status" value="1"/>
</dbReference>
<dbReference type="PROSITE" id="PS51831">
    <property type="entry name" value="HD"/>
    <property type="match status" value="1"/>
</dbReference>
<dbReference type="PROSITE" id="PS50084">
    <property type="entry name" value="KH_TYPE_1"/>
    <property type="match status" value="1"/>
</dbReference>
<comment type="function">
    <text evidence="1">Endoribonuclease that initiates mRNA decay.</text>
</comment>
<comment type="subcellular location">
    <subcellularLocation>
        <location evidence="1">Cell membrane</location>
        <topology evidence="1">Single-pass membrane protein</topology>
    </subcellularLocation>
</comment>
<comment type="similarity">
    <text evidence="1">Belongs to the RNase Y family.</text>
</comment>
<protein>
    <recommendedName>
        <fullName evidence="1">Ribonuclease Y</fullName>
        <shortName evidence="1">RNase Y</shortName>
        <ecNumber evidence="1">3.1.-.-</ecNumber>
    </recommendedName>
</protein>
<feature type="chain" id="PRO_0000344851" description="Ribonuclease Y">
    <location>
        <begin position="1"/>
        <end position="514"/>
    </location>
</feature>
<feature type="transmembrane region" description="Helical" evidence="1">
    <location>
        <begin position="3"/>
        <end position="23"/>
    </location>
</feature>
<feature type="domain" description="KH" evidence="1">
    <location>
        <begin position="204"/>
        <end position="289"/>
    </location>
</feature>
<feature type="domain" description="HD" evidence="2">
    <location>
        <begin position="330"/>
        <end position="423"/>
    </location>
</feature>
<reference key="1">
    <citation type="journal article" date="2008" name="Proc. Natl. Acad. Sci. U.S.A.">
        <title>The genome of Clostridium kluyveri, a strict anaerobe with unique metabolic features.</title>
        <authorList>
            <person name="Seedorf H."/>
            <person name="Fricke W.F."/>
            <person name="Veith B."/>
            <person name="Brueggemann H."/>
            <person name="Liesegang H."/>
            <person name="Strittmatter A."/>
            <person name="Miethke M."/>
            <person name="Buckel W."/>
            <person name="Hinderberger J."/>
            <person name="Li F."/>
            <person name="Hagemeier C."/>
            <person name="Thauer R.K."/>
            <person name="Gottschalk G."/>
        </authorList>
    </citation>
    <scope>NUCLEOTIDE SEQUENCE [LARGE SCALE GENOMIC DNA]</scope>
    <source>
        <strain>ATCC 8527 / DSM 555 / NBRC 12016 / NCIMB 10680 / K1</strain>
    </source>
</reference>
<sequence length="514" mass="58329">MNYMIIYEIIAGILIVVAILIHFNIMKNKVAAIKSQTIYESNRLKEEAKKEAQSQKKEAILEAKEEVHKLRNDLERESRDRRMEIQRLEKRVLQREELLDKKNDVLEKRESSLDKKQQEIDKVQAKVEELYQKQREELERLSGLSSEEAKDILLEEVNKEIKHESAMMIKEVETKAKEEADKRAREIITSAIQRCAADHVAETTVHVVTLPNDEMKGRIIGREGRNIRTLETLTGVDLIIDDTPEAVILSGFDPIRREVARIALEKLIIDGRIHPARIEEMVEKAEKELENDIKEEGEQATFETGVHGLHIELIKLLGRLKYRTSYGQNVLKHSVEVAYLAGLMASEIGIDPTIAKRAGLLHDIGKAVDHEVEGPHAVIGAEIAKKYRESPVVVNAIGAHHGDLEFQSLEDVLVQAADAISAARPGARRETLEAYIKRLEKLEKIANTCEGVEKSYAIQAGRELRIMVKPEDIDDAGALEMARNIVKKIEEELEYPGQIKVNVIRETRAIEYAK</sequence>
<organism>
    <name type="scientific">Clostridium kluyveri (strain ATCC 8527 / DSM 555 / NBRC 12016 / NCIMB 10680 / K1)</name>
    <dbReference type="NCBI Taxonomy" id="431943"/>
    <lineage>
        <taxon>Bacteria</taxon>
        <taxon>Bacillati</taxon>
        <taxon>Bacillota</taxon>
        <taxon>Clostridia</taxon>
        <taxon>Eubacteriales</taxon>
        <taxon>Clostridiaceae</taxon>
        <taxon>Clostridium</taxon>
    </lineage>
</organism>
<proteinExistence type="inferred from homology"/>
<name>RNY_CLOK5</name>
<gene>
    <name evidence="1" type="primary">rny</name>
    <name type="ordered locus">CKL_1446</name>
</gene>
<keyword id="KW-1003">Cell membrane</keyword>
<keyword id="KW-0255">Endonuclease</keyword>
<keyword id="KW-0378">Hydrolase</keyword>
<keyword id="KW-0472">Membrane</keyword>
<keyword id="KW-0540">Nuclease</keyword>
<keyword id="KW-1185">Reference proteome</keyword>
<keyword id="KW-0694">RNA-binding</keyword>
<keyword id="KW-0812">Transmembrane</keyword>
<keyword id="KW-1133">Transmembrane helix</keyword>
<accession>A5N857</accession>
<evidence type="ECO:0000255" key="1">
    <source>
        <dbReference type="HAMAP-Rule" id="MF_00335"/>
    </source>
</evidence>
<evidence type="ECO:0000255" key="2">
    <source>
        <dbReference type="PROSITE-ProRule" id="PRU01175"/>
    </source>
</evidence>